<keyword id="KW-1003">Cell membrane</keyword>
<keyword id="KW-0472">Membrane</keyword>
<keyword id="KW-0812">Transmembrane</keyword>
<keyword id="KW-1133">Transmembrane helix</keyword>
<gene>
    <name type="ordered locus">SAB1779c</name>
</gene>
<sequence length="374" mass="42609">MNALFIIIFMIVVGAIIGGITNVIAIRMLFHPFKPYYIFKFRVPFTPGLIPKRREEIATKIGQVIEEHLLTETLINEKLKSEQSQQAIESMIQQQLQKLTKDQLSIKQITSQIDIDIEQVLQTNGNQYIASQLNNYYTKHQNQTIASLLPNQLVTFLDQHVDNATDLLCDRARNYLSSAKGTQDINDMLDTFFNEKGKLIGMLQMFMTKESIADRIQQELIRLTSHPKARAIVTSLITNEYQTFKDKPLNELLDASQFNEIAENLSVYVTTYASKQANKPVVTLMPQFVDYLEGQLSSKLANLIIEQLSIHLSTIMKKVDLRGLIEEQINTFDLDYIEKLIIEIANKELKLIMSLGFILGGIIGFFQGLVAIFV</sequence>
<feature type="chain" id="PRO_0000388304" description="UPF0754 membrane protein SAB1779c">
    <location>
        <begin position="1"/>
        <end position="374"/>
    </location>
</feature>
<feature type="transmembrane region" description="Helical" evidence="2">
    <location>
        <begin position="4"/>
        <end position="24"/>
    </location>
</feature>
<feature type="transmembrane region" description="Helical" evidence="2">
    <location>
        <begin position="354"/>
        <end position="374"/>
    </location>
</feature>
<dbReference type="EMBL" id="AJ938182">
    <property type="protein sequence ID" value="CAI81468.1"/>
    <property type="molecule type" value="Genomic_DNA"/>
</dbReference>
<dbReference type="RefSeq" id="WP_000992510.1">
    <property type="nucleotide sequence ID" value="NC_007622.1"/>
</dbReference>
<dbReference type="KEGG" id="sab:SAB1779c"/>
<dbReference type="HOGENOM" id="CLU_042384_0_0_9"/>
<dbReference type="GO" id="GO:0005886">
    <property type="term" value="C:plasma membrane"/>
    <property type="evidence" value="ECO:0007669"/>
    <property type="project" value="UniProtKB-SubCell"/>
</dbReference>
<dbReference type="InterPro" id="IPR007383">
    <property type="entry name" value="DUF445"/>
</dbReference>
<dbReference type="InterPro" id="IPR016991">
    <property type="entry name" value="UCP032178"/>
</dbReference>
<dbReference type="PANTHER" id="PTHR35791">
    <property type="entry name" value="UPF0754 MEMBRANE PROTEIN YHEB"/>
    <property type="match status" value="1"/>
</dbReference>
<dbReference type="PANTHER" id="PTHR35791:SF1">
    <property type="entry name" value="UPF0754 MEMBRANE PROTEIN YHEB"/>
    <property type="match status" value="1"/>
</dbReference>
<dbReference type="Pfam" id="PF04286">
    <property type="entry name" value="DUF445"/>
    <property type="match status" value="1"/>
</dbReference>
<dbReference type="PIRSF" id="PIRSF032178">
    <property type="entry name" value="UCP032178"/>
    <property type="match status" value="1"/>
</dbReference>
<protein>
    <recommendedName>
        <fullName>UPF0754 membrane protein SAB1779c</fullName>
    </recommendedName>
</protein>
<name>Y1779_STAAB</name>
<evidence type="ECO:0000250" key="1"/>
<evidence type="ECO:0000255" key="2"/>
<evidence type="ECO:0000305" key="3"/>
<accession>Q2YTZ1</accession>
<reference key="1">
    <citation type="journal article" date="2007" name="PLoS ONE">
        <title>Molecular correlates of host specialization in Staphylococcus aureus.</title>
        <authorList>
            <person name="Herron-Olson L."/>
            <person name="Fitzgerald J.R."/>
            <person name="Musser J.M."/>
            <person name="Kapur V."/>
        </authorList>
    </citation>
    <scope>NUCLEOTIDE SEQUENCE [LARGE SCALE GENOMIC DNA]</scope>
    <source>
        <strain>bovine RF122 / ET3-1</strain>
    </source>
</reference>
<proteinExistence type="inferred from homology"/>
<comment type="subcellular location">
    <subcellularLocation>
        <location evidence="1">Cell membrane</location>
        <topology evidence="1">Multi-pass membrane protein</topology>
    </subcellularLocation>
</comment>
<comment type="similarity">
    <text evidence="3">Belongs to the UPF0754 family.</text>
</comment>
<organism>
    <name type="scientific">Staphylococcus aureus (strain bovine RF122 / ET3-1)</name>
    <dbReference type="NCBI Taxonomy" id="273036"/>
    <lineage>
        <taxon>Bacteria</taxon>
        <taxon>Bacillati</taxon>
        <taxon>Bacillota</taxon>
        <taxon>Bacilli</taxon>
        <taxon>Bacillales</taxon>
        <taxon>Staphylococcaceae</taxon>
        <taxon>Staphylococcus</taxon>
    </lineage>
</organism>